<gene>
    <name type="primary">HIPK4</name>
</gene>
<sequence>MSTIQSETDCYDIIEVLGKGTFGEVAKGWRRSTGEMVAIKILKNDAYRNRIIKNELKLLHCMRGLDPEEAHVIRFLEFFHDALKFYLVFELLEQNLFEFQKENNFAPLPARHIRTVTLQVLTALARLKELAIIHADLKPENIMLVDQTRCPFRVKVIDFGSASIFSEVRYVKEPYIQSRFYRAPEILLGLPFCEKVDVWSLGCVMAELHLGWPLYPGNNEYDQVRYICETQGLPKPHLLHAACKAHHFFKRNPHPDAANPWQLKSSADYLAETKVRPLERRKYMLKSLDQIETVNGGSVASRLTFPDREALAEHADLKSMVELIKRMLTWESHERISPSAALRHPFVSMQQLRSAHETTHYYQLSLRSYRLSLQVEGKPPTPVVAAEDGTPYYCLAEEKEAAGMGSVAGSSPFFREEKAPGMQRAIDQLDDLSLQEAGHGLWGETCTNAVSDMMVPLKAAITGHHVPDSGPEPILAFYSSRLAGRHKARKPPAGSKSDSNFSNLIRLSQVSPEDDRPCRGSSWEEGEHLGASAEPLAILQRDEDGPNIDNMTMEAERPDPELFDPSSCPGEWLSEPDCTLESVRGPRAQGLPPRRSHQHGPPRGATSFLQHVTGHH</sequence>
<accession>Q8NE63</accession>
<accession>A8K863</accession>
<accession>Q96M54</accession>
<reference key="1">
    <citation type="journal article" date="2004" name="Nat. Genet.">
        <title>Complete sequencing and characterization of 21,243 full-length human cDNAs.</title>
        <authorList>
            <person name="Ota T."/>
            <person name="Suzuki Y."/>
            <person name="Nishikawa T."/>
            <person name="Otsuki T."/>
            <person name="Sugiyama T."/>
            <person name="Irie R."/>
            <person name="Wakamatsu A."/>
            <person name="Hayashi K."/>
            <person name="Sato H."/>
            <person name="Nagai K."/>
            <person name="Kimura K."/>
            <person name="Makita H."/>
            <person name="Sekine M."/>
            <person name="Obayashi M."/>
            <person name="Nishi T."/>
            <person name="Shibahara T."/>
            <person name="Tanaka T."/>
            <person name="Ishii S."/>
            <person name="Yamamoto J."/>
            <person name="Saito K."/>
            <person name="Kawai Y."/>
            <person name="Isono Y."/>
            <person name="Nakamura Y."/>
            <person name="Nagahari K."/>
            <person name="Murakami K."/>
            <person name="Yasuda T."/>
            <person name="Iwayanagi T."/>
            <person name="Wagatsuma M."/>
            <person name="Shiratori A."/>
            <person name="Sudo H."/>
            <person name="Hosoiri T."/>
            <person name="Kaku Y."/>
            <person name="Kodaira H."/>
            <person name="Kondo H."/>
            <person name="Sugawara M."/>
            <person name="Takahashi M."/>
            <person name="Kanda K."/>
            <person name="Yokoi T."/>
            <person name="Furuya T."/>
            <person name="Kikkawa E."/>
            <person name="Omura Y."/>
            <person name="Abe K."/>
            <person name="Kamihara K."/>
            <person name="Katsuta N."/>
            <person name="Sato K."/>
            <person name="Tanikawa M."/>
            <person name="Yamazaki M."/>
            <person name="Ninomiya K."/>
            <person name="Ishibashi T."/>
            <person name="Yamashita H."/>
            <person name="Murakawa K."/>
            <person name="Fujimori K."/>
            <person name="Tanai H."/>
            <person name="Kimata M."/>
            <person name="Watanabe M."/>
            <person name="Hiraoka S."/>
            <person name="Chiba Y."/>
            <person name="Ishida S."/>
            <person name="Ono Y."/>
            <person name="Takiguchi S."/>
            <person name="Watanabe S."/>
            <person name="Yosida M."/>
            <person name="Hotuta T."/>
            <person name="Kusano J."/>
            <person name="Kanehori K."/>
            <person name="Takahashi-Fujii A."/>
            <person name="Hara H."/>
            <person name="Tanase T.-O."/>
            <person name="Nomura Y."/>
            <person name="Togiya S."/>
            <person name="Komai F."/>
            <person name="Hara R."/>
            <person name="Takeuchi K."/>
            <person name="Arita M."/>
            <person name="Imose N."/>
            <person name="Musashino K."/>
            <person name="Yuuki H."/>
            <person name="Oshima A."/>
            <person name="Sasaki N."/>
            <person name="Aotsuka S."/>
            <person name="Yoshikawa Y."/>
            <person name="Matsunawa H."/>
            <person name="Ichihara T."/>
            <person name="Shiohata N."/>
            <person name="Sano S."/>
            <person name="Moriya S."/>
            <person name="Momiyama H."/>
            <person name="Satoh N."/>
            <person name="Takami S."/>
            <person name="Terashima Y."/>
            <person name="Suzuki O."/>
            <person name="Nakagawa S."/>
            <person name="Senoh A."/>
            <person name="Mizoguchi H."/>
            <person name="Goto Y."/>
            <person name="Shimizu F."/>
            <person name="Wakebe H."/>
            <person name="Hishigaki H."/>
            <person name="Watanabe T."/>
            <person name="Sugiyama A."/>
            <person name="Takemoto M."/>
            <person name="Kawakami B."/>
            <person name="Yamazaki M."/>
            <person name="Watanabe K."/>
            <person name="Kumagai A."/>
            <person name="Itakura S."/>
            <person name="Fukuzumi Y."/>
            <person name="Fujimori Y."/>
            <person name="Komiyama M."/>
            <person name="Tashiro H."/>
            <person name="Tanigami A."/>
            <person name="Fujiwara T."/>
            <person name="Ono T."/>
            <person name="Yamada K."/>
            <person name="Fujii Y."/>
            <person name="Ozaki K."/>
            <person name="Hirao M."/>
            <person name="Ohmori Y."/>
            <person name="Kawabata A."/>
            <person name="Hikiji T."/>
            <person name="Kobatake N."/>
            <person name="Inagaki H."/>
            <person name="Ikema Y."/>
            <person name="Okamoto S."/>
            <person name="Okitani R."/>
            <person name="Kawakami T."/>
            <person name="Noguchi S."/>
            <person name="Itoh T."/>
            <person name="Shigeta K."/>
            <person name="Senba T."/>
            <person name="Matsumura K."/>
            <person name="Nakajima Y."/>
            <person name="Mizuno T."/>
            <person name="Morinaga M."/>
            <person name="Sasaki M."/>
            <person name="Togashi T."/>
            <person name="Oyama M."/>
            <person name="Hata H."/>
            <person name="Watanabe M."/>
            <person name="Komatsu T."/>
            <person name="Mizushima-Sugano J."/>
            <person name="Satoh T."/>
            <person name="Shirai Y."/>
            <person name="Takahashi Y."/>
            <person name="Nakagawa K."/>
            <person name="Okumura K."/>
            <person name="Nagase T."/>
            <person name="Nomura N."/>
            <person name="Kikuchi H."/>
            <person name="Masuho Y."/>
            <person name="Yamashita R."/>
            <person name="Nakai K."/>
            <person name="Yada T."/>
            <person name="Nakamura Y."/>
            <person name="Ohara O."/>
            <person name="Isogai T."/>
            <person name="Sugano S."/>
        </authorList>
    </citation>
    <scope>NUCLEOTIDE SEQUENCE [LARGE SCALE MRNA]</scope>
    <source>
        <tissue>Testis</tissue>
    </source>
</reference>
<reference key="2">
    <citation type="journal article" date="2004" name="Genome Res.">
        <title>The status, quality, and expansion of the NIH full-length cDNA project: the Mammalian Gene Collection (MGC).</title>
        <authorList>
            <consortium name="The MGC Project Team"/>
        </authorList>
    </citation>
    <scope>NUCLEOTIDE SEQUENCE [LARGE SCALE MRNA]</scope>
    <source>
        <tissue>Testis</tissue>
    </source>
</reference>
<reference key="3">
    <citation type="journal article" date="2007" name="Nature">
        <title>Patterns of somatic mutation in human cancer genomes.</title>
        <authorList>
            <person name="Greenman C."/>
            <person name="Stephens P."/>
            <person name="Smith R."/>
            <person name="Dalgliesh G.L."/>
            <person name="Hunter C."/>
            <person name="Bignell G."/>
            <person name="Davies H."/>
            <person name="Teague J."/>
            <person name="Butler A."/>
            <person name="Stevens C."/>
            <person name="Edkins S."/>
            <person name="O'Meara S."/>
            <person name="Vastrik I."/>
            <person name="Schmidt E.E."/>
            <person name="Avis T."/>
            <person name="Barthorpe S."/>
            <person name="Bhamra G."/>
            <person name="Buck G."/>
            <person name="Choudhury B."/>
            <person name="Clements J."/>
            <person name="Cole J."/>
            <person name="Dicks E."/>
            <person name="Forbes S."/>
            <person name="Gray K."/>
            <person name="Halliday K."/>
            <person name="Harrison R."/>
            <person name="Hills K."/>
            <person name="Hinton J."/>
            <person name="Jenkinson A."/>
            <person name="Jones D."/>
            <person name="Menzies A."/>
            <person name="Mironenko T."/>
            <person name="Perry J."/>
            <person name="Raine K."/>
            <person name="Richardson D."/>
            <person name="Shepherd R."/>
            <person name="Small A."/>
            <person name="Tofts C."/>
            <person name="Varian J."/>
            <person name="Webb T."/>
            <person name="West S."/>
            <person name="Widaa S."/>
            <person name="Yates A."/>
            <person name="Cahill D.P."/>
            <person name="Louis D.N."/>
            <person name="Goldstraw P."/>
            <person name="Nicholson A.G."/>
            <person name="Brasseur F."/>
            <person name="Looijenga L."/>
            <person name="Weber B.L."/>
            <person name="Chiew Y.-E."/>
            <person name="DeFazio A."/>
            <person name="Greaves M.F."/>
            <person name="Green A.R."/>
            <person name="Campbell P."/>
            <person name="Birney E."/>
            <person name="Easton D.F."/>
            <person name="Chenevix-Trench G."/>
            <person name="Tan M.-H."/>
            <person name="Khoo S.K."/>
            <person name="Teh B.T."/>
            <person name="Yuen S.T."/>
            <person name="Leung S.Y."/>
            <person name="Wooster R."/>
            <person name="Futreal P.A."/>
            <person name="Stratton M.R."/>
        </authorList>
    </citation>
    <scope>VARIANTS [LARGE SCALE ANALYSIS] THR-106; MET-171; MET-381; THR-386; ARG-406; SER-421 AND CYS-481</scope>
</reference>
<keyword id="KW-0067">ATP-binding</keyword>
<keyword id="KW-0963">Cytoplasm</keyword>
<keyword id="KW-0418">Kinase</keyword>
<keyword id="KW-0547">Nucleotide-binding</keyword>
<keyword id="KW-0597">Phosphoprotein</keyword>
<keyword id="KW-1267">Proteomics identification</keyword>
<keyword id="KW-1185">Reference proteome</keyword>
<keyword id="KW-0723">Serine/threonine-protein kinase</keyword>
<keyword id="KW-0808">Transferase</keyword>
<comment type="function">
    <text evidence="1 7">Protein kinase that phosphorylates human TP53 at Ser-9, and thus induces TP53 repression of BIRC5 promoter (By similarity). May act as a corepressor of transcription factors (Potential).</text>
</comment>
<comment type="catalytic activity">
    <reaction>
        <text>L-seryl-[protein] + ATP = O-phospho-L-seryl-[protein] + ADP + H(+)</text>
        <dbReference type="Rhea" id="RHEA:17989"/>
        <dbReference type="Rhea" id="RHEA-COMP:9863"/>
        <dbReference type="Rhea" id="RHEA-COMP:11604"/>
        <dbReference type="ChEBI" id="CHEBI:15378"/>
        <dbReference type="ChEBI" id="CHEBI:29999"/>
        <dbReference type="ChEBI" id="CHEBI:30616"/>
        <dbReference type="ChEBI" id="CHEBI:83421"/>
        <dbReference type="ChEBI" id="CHEBI:456216"/>
        <dbReference type="EC" id="2.7.11.1"/>
    </reaction>
</comment>
<comment type="catalytic activity">
    <reaction>
        <text>L-threonyl-[protein] + ATP = O-phospho-L-threonyl-[protein] + ADP + H(+)</text>
        <dbReference type="Rhea" id="RHEA:46608"/>
        <dbReference type="Rhea" id="RHEA-COMP:11060"/>
        <dbReference type="Rhea" id="RHEA-COMP:11605"/>
        <dbReference type="ChEBI" id="CHEBI:15378"/>
        <dbReference type="ChEBI" id="CHEBI:30013"/>
        <dbReference type="ChEBI" id="CHEBI:30616"/>
        <dbReference type="ChEBI" id="CHEBI:61977"/>
        <dbReference type="ChEBI" id="CHEBI:456216"/>
        <dbReference type="EC" id="2.7.11.1"/>
    </reaction>
</comment>
<comment type="interaction">
    <interactant intactId="EBI-6381114">
        <id>Q8NE63</id>
    </interactant>
    <interactant intactId="EBI-743771">
        <id>Q92624</id>
        <label>APPBP2</label>
    </interactant>
    <organismsDiffer>false</organismsDiffer>
    <experiments>3</experiments>
</comment>
<comment type="interaction">
    <interactant intactId="EBI-6381114">
        <id>Q8NE63</id>
    </interactant>
    <interactant intactId="EBI-352572">
        <id>P08238</id>
        <label>HSP90AB1</label>
    </interactant>
    <organismsDiffer>false</organismsDiffer>
    <experiments>2</experiments>
</comment>
<comment type="interaction">
    <interactant intactId="EBI-6381114">
        <id>Q8NE63</id>
    </interactant>
    <interactant intactId="EBI-356498">
        <id>P62258</id>
        <label>YWHAE</label>
    </interactant>
    <organismsDiffer>false</organismsDiffer>
    <experiments>2</experiments>
</comment>
<comment type="subcellular location">
    <subcellularLocation>
        <location evidence="1">Cytoplasm</location>
    </subcellularLocation>
</comment>
<comment type="PTM">
    <text evidence="1">Autophosphorylated.</text>
</comment>
<comment type="similarity">
    <text evidence="7">Belongs to the protein kinase superfamily. CMGC Ser/Thr protein kinase family. HIPK subfamily.</text>
</comment>
<comment type="sequence caution" evidence="7">
    <conflict type="miscellaneous discrepancy">
        <sequence resource="EMBL-CDS" id="BAB71458"/>
    </conflict>
    <text>Aberrant splicing.</text>
</comment>
<protein>
    <recommendedName>
        <fullName>Homeodomain-interacting protein kinase 4</fullName>
        <ecNumber>2.7.11.1</ecNumber>
    </recommendedName>
</protein>
<dbReference type="EC" id="2.7.11.1"/>
<dbReference type="EMBL" id="AK057380">
    <property type="protein sequence ID" value="BAB71458.1"/>
    <property type="status" value="ALT_SEQ"/>
    <property type="molecule type" value="mRNA"/>
</dbReference>
<dbReference type="EMBL" id="AK292228">
    <property type="protein sequence ID" value="BAF84917.1"/>
    <property type="molecule type" value="mRNA"/>
</dbReference>
<dbReference type="EMBL" id="BC034501">
    <property type="protein sequence ID" value="AAH34501.1"/>
    <property type="molecule type" value="mRNA"/>
</dbReference>
<dbReference type="CCDS" id="CCDS12555.1"/>
<dbReference type="RefSeq" id="NP_653286.2">
    <property type="nucleotide sequence ID" value="NM_144685.4"/>
</dbReference>
<dbReference type="SMR" id="Q8NE63"/>
<dbReference type="BioGRID" id="127086">
    <property type="interactions" value="36"/>
</dbReference>
<dbReference type="FunCoup" id="Q8NE63">
    <property type="interactions" value="616"/>
</dbReference>
<dbReference type="IntAct" id="Q8NE63">
    <property type="interactions" value="34"/>
</dbReference>
<dbReference type="STRING" id="9606.ENSP00000291823"/>
<dbReference type="BindingDB" id="Q8NE63"/>
<dbReference type="ChEMBL" id="CHEMBL1075167"/>
<dbReference type="DrugCentral" id="Q8NE63"/>
<dbReference type="GlyGen" id="Q8NE63">
    <property type="glycosylation" value="1 site"/>
</dbReference>
<dbReference type="iPTMnet" id="Q8NE63"/>
<dbReference type="PhosphoSitePlus" id="Q8NE63"/>
<dbReference type="BioMuta" id="HIPK4"/>
<dbReference type="DMDM" id="74762559"/>
<dbReference type="jPOST" id="Q8NE63"/>
<dbReference type="MassIVE" id="Q8NE63"/>
<dbReference type="PaxDb" id="9606-ENSP00000291823"/>
<dbReference type="PeptideAtlas" id="Q8NE63"/>
<dbReference type="ProteomicsDB" id="73127"/>
<dbReference type="Antibodypedia" id="16956">
    <property type="antibodies" value="293 antibodies from 28 providers"/>
</dbReference>
<dbReference type="DNASU" id="147746"/>
<dbReference type="Ensembl" id="ENST00000291823.3">
    <property type="protein sequence ID" value="ENSP00000291823.1"/>
    <property type="gene ID" value="ENSG00000160396.9"/>
</dbReference>
<dbReference type="GeneID" id="147746"/>
<dbReference type="KEGG" id="hsa:147746"/>
<dbReference type="MANE-Select" id="ENST00000291823.3">
    <property type="protein sequence ID" value="ENSP00000291823.1"/>
    <property type="RefSeq nucleotide sequence ID" value="NM_144685.5"/>
    <property type="RefSeq protein sequence ID" value="NP_653286.2"/>
</dbReference>
<dbReference type="UCSC" id="uc002onp.3">
    <property type="organism name" value="human"/>
</dbReference>
<dbReference type="AGR" id="HGNC:19007"/>
<dbReference type="CTD" id="147746"/>
<dbReference type="DisGeNET" id="147746"/>
<dbReference type="GeneCards" id="HIPK4"/>
<dbReference type="HGNC" id="HGNC:19007">
    <property type="gene designation" value="HIPK4"/>
</dbReference>
<dbReference type="HPA" id="ENSG00000160396">
    <property type="expression patterns" value="Group enriched (brain, testis)"/>
</dbReference>
<dbReference type="MalaCards" id="HIPK4"/>
<dbReference type="MIM" id="611712">
    <property type="type" value="gene"/>
</dbReference>
<dbReference type="neXtProt" id="NX_Q8NE63"/>
<dbReference type="OpenTargets" id="ENSG00000160396"/>
<dbReference type="PharmGKB" id="PA134883524"/>
<dbReference type="VEuPathDB" id="HostDB:ENSG00000160396"/>
<dbReference type="eggNOG" id="KOG0667">
    <property type="taxonomic scope" value="Eukaryota"/>
</dbReference>
<dbReference type="GeneTree" id="ENSGT00940000161512"/>
<dbReference type="HOGENOM" id="CLU_000288_5_14_1"/>
<dbReference type="InParanoid" id="Q8NE63"/>
<dbReference type="OMA" id="DMTMDAE"/>
<dbReference type="OrthoDB" id="437530at2759"/>
<dbReference type="PAN-GO" id="Q8NE63">
    <property type="GO annotations" value="6 GO annotations based on evolutionary models"/>
</dbReference>
<dbReference type="PhylomeDB" id="Q8NE63"/>
<dbReference type="TreeFam" id="TF105417"/>
<dbReference type="PathwayCommons" id="Q8NE63"/>
<dbReference type="SignaLink" id="Q8NE63"/>
<dbReference type="BioGRID-ORCS" id="147746">
    <property type="hits" value="9 hits in 1184 CRISPR screens"/>
</dbReference>
<dbReference type="ChiTaRS" id="HIPK4">
    <property type="organism name" value="human"/>
</dbReference>
<dbReference type="GenomeRNAi" id="147746"/>
<dbReference type="Pharos" id="Q8NE63">
    <property type="development level" value="Tchem"/>
</dbReference>
<dbReference type="PRO" id="PR:Q8NE63"/>
<dbReference type="Proteomes" id="UP000005640">
    <property type="component" value="Chromosome 19"/>
</dbReference>
<dbReference type="RNAct" id="Q8NE63">
    <property type="molecule type" value="protein"/>
</dbReference>
<dbReference type="Bgee" id="ENSG00000160396">
    <property type="expression patterns" value="Expressed in male germ line stem cell (sensu Vertebrata) in testis and 95 other cell types or tissues"/>
</dbReference>
<dbReference type="ExpressionAtlas" id="Q8NE63">
    <property type="expression patterns" value="baseline and differential"/>
</dbReference>
<dbReference type="GO" id="GO:0005737">
    <property type="term" value="C:cytoplasm"/>
    <property type="evidence" value="ECO:0000318"/>
    <property type="project" value="GO_Central"/>
</dbReference>
<dbReference type="GO" id="GO:0005634">
    <property type="term" value="C:nucleus"/>
    <property type="evidence" value="ECO:0000318"/>
    <property type="project" value="GO_Central"/>
</dbReference>
<dbReference type="GO" id="GO:0005524">
    <property type="term" value="F:ATP binding"/>
    <property type="evidence" value="ECO:0007669"/>
    <property type="project" value="UniProtKB-KW"/>
</dbReference>
<dbReference type="GO" id="GO:0035173">
    <property type="term" value="F:histone kinase activity"/>
    <property type="evidence" value="ECO:0007669"/>
    <property type="project" value="Ensembl"/>
</dbReference>
<dbReference type="GO" id="GO:0106310">
    <property type="term" value="F:protein serine kinase activity"/>
    <property type="evidence" value="ECO:0007669"/>
    <property type="project" value="RHEA"/>
</dbReference>
<dbReference type="GO" id="GO:0004674">
    <property type="term" value="F:protein serine/threonine kinase activity"/>
    <property type="evidence" value="ECO:0000318"/>
    <property type="project" value="GO_Central"/>
</dbReference>
<dbReference type="GO" id="GO:0004713">
    <property type="term" value="F:protein tyrosine kinase activity"/>
    <property type="evidence" value="ECO:0000318"/>
    <property type="project" value="GO_Central"/>
</dbReference>
<dbReference type="GO" id="GO:1901796">
    <property type="term" value="P:regulation of signal transduction by p53 class mediator"/>
    <property type="evidence" value="ECO:0007669"/>
    <property type="project" value="Ensembl"/>
</dbReference>
<dbReference type="FunFam" id="1.10.510.10:FF:000029">
    <property type="entry name" value="Homeodomain-interacting protein kinase 2 isoform 1"/>
    <property type="match status" value="1"/>
</dbReference>
<dbReference type="Gene3D" id="3.30.200.20">
    <property type="entry name" value="Phosphorylase Kinase, domain 1"/>
    <property type="match status" value="1"/>
</dbReference>
<dbReference type="Gene3D" id="1.10.510.10">
    <property type="entry name" value="Transferase(Phosphotransferase) domain 1"/>
    <property type="match status" value="1"/>
</dbReference>
<dbReference type="InterPro" id="IPR011009">
    <property type="entry name" value="Kinase-like_dom_sf"/>
</dbReference>
<dbReference type="InterPro" id="IPR000719">
    <property type="entry name" value="Prot_kinase_dom"/>
</dbReference>
<dbReference type="InterPro" id="IPR017441">
    <property type="entry name" value="Protein_kinase_ATP_BS"/>
</dbReference>
<dbReference type="InterPro" id="IPR008271">
    <property type="entry name" value="Ser/Thr_kinase_AS"/>
</dbReference>
<dbReference type="InterPro" id="IPR050494">
    <property type="entry name" value="Ser_Thr_dual-spec_kinase"/>
</dbReference>
<dbReference type="PANTHER" id="PTHR24058">
    <property type="entry name" value="DUAL SPECIFICITY PROTEIN KINASE"/>
    <property type="match status" value="1"/>
</dbReference>
<dbReference type="PANTHER" id="PTHR24058:SF46">
    <property type="entry name" value="HOMEODOMAIN-INTERACTING PROTEIN KINASE 4"/>
    <property type="match status" value="1"/>
</dbReference>
<dbReference type="Pfam" id="PF00069">
    <property type="entry name" value="Pkinase"/>
    <property type="match status" value="1"/>
</dbReference>
<dbReference type="SMART" id="SM00220">
    <property type="entry name" value="S_TKc"/>
    <property type="match status" value="1"/>
</dbReference>
<dbReference type="SUPFAM" id="SSF56112">
    <property type="entry name" value="Protein kinase-like (PK-like)"/>
    <property type="match status" value="1"/>
</dbReference>
<dbReference type="PROSITE" id="PS00107">
    <property type="entry name" value="PROTEIN_KINASE_ATP"/>
    <property type="match status" value="1"/>
</dbReference>
<dbReference type="PROSITE" id="PS50011">
    <property type="entry name" value="PROTEIN_KINASE_DOM"/>
    <property type="match status" value="1"/>
</dbReference>
<dbReference type="PROSITE" id="PS00108">
    <property type="entry name" value="PROTEIN_KINASE_ST"/>
    <property type="match status" value="1"/>
</dbReference>
<proteinExistence type="evidence at protein level"/>
<name>HIPK4_HUMAN</name>
<feature type="chain" id="PRO_0000232401" description="Homeodomain-interacting protein kinase 4">
    <location>
        <begin position="1"/>
        <end position="616"/>
    </location>
</feature>
<feature type="domain" description="Protein kinase" evidence="3">
    <location>
        <begin position="11"/>
        <end position="347"/>
    </location>
</feature>
<feature type="region of interest" description="Disordered" evidence="5">
    <location>
        <begin position="486"/>
        <end position="616"/>
    </location>
</feature>
<feature type="compositionally biased region" description="Polar residues" evidence="5">
    <location>
        <begin position="496"/>
        <end position="511"/>
    </location>
</feature>
<feature type="active site" description="Proton acceptor" evidence="3 4">
    <location>
        <position position="136"/>
    </location>
</feature>
<feature type="binding site" evidence="3">
    <location>
        <begin position="17"/>
        <end position="25"/>
    </location>
    <ligand>
        <name>ATP</name>
        <dbReference type="ChEBI" id="CHEBI:30616"/>
    </ligand>
</feature>
<feature type="binding site" evidence="3">
    <location>
        <position position="40"/>
    </location>
    <ligand>
        <name>ATP</name>
        <dbReference type="ChEBI" id="CHEBI:30616"/>
    </ligand>
</feature>
<feature type="modified residue" description="Phosphoserine" evidence="2">
    <location>
        <position position="511"/>
    </location>
</feature>
<feature type="sequence variant" id="VAR_040554" description="In dbSNP:rs34434715." evidence="6">
    <original>A</original>
    <variation>T</variation>
    <location>
        <position position="106"/>
    </location>
</feature>
<feature type="sequence variant" id="VAR_040555" description="In dbSNP:rs55964225." evidence="6">
    <original>V</original>
    <variation>M</variation>
    <location>
        <position position="171"/>
    </location>
</feature>
<feature type="sequence variant" id="VAR_030578" description="In dbSNP:rs11670988.">
    <original>R</original>
    <variation>Q</variation>
    <location>
        <position position="302"/>
    </location>
</feature>
<feature type="sequence variant" id="VAR_040556" description="In dbSNP:rs55760165." evidence="6">
    <original>T</original>
    <variation>M</variation>
    <location>
        <position position="381"/>
    </location>
</feature>
<feature type="sequence variant" id="VAR_040557" description="In dbSNP:rs56365273." evidence="6">
    <original>A</original>
    <variation>T</variation>
    <location>
        <position position="386"/>
    </location>
</feature>
<feature type="sequence variant" id="VAR_040558" description="In dbSNP:rs56094851." evidence="6">
    <original>S</original>
    <variation>R</variation>
    <location>
        <position position="406"/>
    </location>
</feature>
<feature type="sequence variant" id="VAR_040559" description="In dbSNP:rs56117722." evidence="6">
    <original>G</original>
    <variation>S</variation>
    <location>
        <position position="421"/>
    </location>
</feature>
<feature type="sequence variant" id="VAR_040560" description="In dbSNP:rs55801979." evidence="6">
    <original>R</original>
    <variation>C</variation>
    <location>
        <position position="481"/>
    </location>
</feature>
<feature type="sequence conflict" description="In Ref. 1; BAB71458." evidence="7" ref="1">
    <original>Q</original>
    <variation>R</variation>
    <location>
        <position position="374"/>
    </location>
</feature>
<feature type="sequence conflict" description="In Ref. 1; BAB71458." evidence="7" ref="1">
    <original>T</original>
    <variation>A</variation>
    <location>
        <position position="445"/>
    </location>
</feature>
<feature type="sequence conflict" description="In Ref. 1; BAF84917." evidence="7" ref="1">
    <original>E</original>
    <variation>G</variation>
    <location>
        <position position="581"/>
    </location>
</feature>
<evidence type="ECO:0000250" key="1"/>
<evidence type="ECO:0000250" key="2">
    <source>
        <dbReference type="UniProtKB" id="Q3V016"/>
    </source>
</evidence>
<evidence type="ECO:0000255" key="3">
    <source>
        <dbReference type="PROSITE-ProRule" id="PRU00159"/>
    </source>
</evidence>
<evidence type="ECO:0000255" key="4">
    <source>
        <dbReference type="PROSITE-ProRule" id="PRU10027"/>
    </source>
</evidence>
<evidence type="ECO:0000256" key="5">
    <source>
        <dbReference type="SAM" id="MobiDB-lite"/>
    </source>
</evidence>
<evidence type="ECO:0000269" key="6">
    <source>
    </source>
</evidence>
<evidence type="ECO:0000305" key="7"/>
<organism>
    <name type="scientific">Homo sapiens</name>
    <name type="common">Human</name>
    <dbReference type="NCBI Taxonomy" id="9606"/>
    <lineage>
        <taxon>Eukaryota</taxon>
        <taxon>Metazoa</taxon>
        <taxon>Chordata</taxon>
        <taxon>Craniata</taxon>
        <taxon>Vertebrata</taxon>
        <taxon>Euteleostomi</taxon>
        <taxon>Mammalia</taxon>
        <taxon>Eutheria</taxon>
        <taxon>Euarchontoglires</taxon>
        <taxon>Primates</taxon>
        <taxon>Haplorrhini</taxon>
        <taxon>Catarrhini</taxon>
        <taxon>Hominidae</taxon>
        <taxon>Homo</taxon>
    </lineage>
</organism>